<keyword id="KW-0002">3D-structure</keyword>
<keyword id="KW-1003">Cell membrane</keyword>
<keyword id="KW-0472">Membrane</keyword>
<keyword id="KW-1185">Reference proteome</keyword>
<keyword id="KW-0677">Repeat</keyword>
<keyword id="KW-0812">Transmembrane</keyword>
<keyword id="KW-1133">Transmembrane helix</keyword>
<keyword id="KW-0813">Transport</keyword>
<organism>
    <name type="scientific">Archaeoglobus fulgidus (strain ATCC 49558 / DSM 4304 / JCM 9628 / NBRC 100126 / VC-16)</name>
    <dbReference type="NCBI Taxonomy" id="224325"/>
    <lineage>
        <taxon>Archaea</taxon>
        <taxon>Methanobacteriati</taxon>
        <taxon>Methanobacteriota</taxon>
        <taxon>Archaeoglobi</taxon>
        <taxon>Archaeoglobales</taxon>
        <taxon>Archaeoglobaceae</taxon>
        <taxon>Archaeoglobus</taxon>
    </lineage>
</organism>
<accession>O28846</accession>
<sequence>MTMTLAKRFTAEVVGTFILVFFGPGAAVITLMIANGADKPNEFNIGIGALGGLGDWFAIGMAFALAIAAVIYSLGRISGAHINPAVTIALWSIGRFPGREVVPYIVAQFIGAALGSLLFLACVGPAAATVGGLGATAPFPGIGYGQAILTEAIGTFLLMLVIMGVAVDERAPPGFAGLVIGLTVGGIITTIGNITGSSLNPARTFGPYLGDSLMGINLWQYFPIYVIGPIVGAVAAAWLYNYLAKE</sequence>
<comment type="function">
    <text evidence="1">Channel that permits osmotically driven movement of water in both directions.</text>
</comment>
<comment type="subcellular location">
    <subcellularLocation>
        <location evidence="1">Cell membrane</location>
        <topology evidence="1">Multi-pass membrane protein</topology>
    </subcellularLocation>
</comment>
<comment type="domain">
    <text>Aquaporins contain two tandem repeats each containing three membrane-spanning domains and a pore-forming loop with the signature motif Asn-Pro-Ala (NPA).</text>
</comment>
<comment type="similarity">
    <text evidence="3">Belongs to the MIP/aquaporin (TC 1.A.8) family.</text>
</comment>
<proteinExistence type="evidence at protein level"/>
<reference key="1">
    <citation type="journal article" date="1997" name="Nature">
        <title>The complete genome sequence of the hyperthermophilic, sulphate-reducing archaeon Archaeoglobus fulgidus.</title>
        <authorList>
            <person name="Klenk H.-P."/>
            <person name="Clayton R.A."/>
            <person name="Tomb J.-F."/>
            <person name="White O."/>
            <person name="Nelson K.E."/>
            <person name="Ketchum K.A."/>
            <person name="Dodson R.J."/>
            <person name="Gwinn M.L."/>
            <person name="Hickey E.K."/>
            <person name="Peterson J.D."/>
            <person name="Richardson D.L."/>
            <person name="Kerlavage A.R."/>
            <person name="Graham D.E."/>
            <person name="Kyrpides N.C."/>
            <person name="Fleischmann R.D."/>
            <person name="Quackenbush J."/>
            <person name="Lee N.H."/>
            <person name="Sutton G.G."/>
            <person name="Gill S.R."/>
            <person name="Kirkness E.F."/>
            <person name="Dougherty B.A."/>
            <person name="McKenney K."/>
            <person name="Adams M.D."/>
            <person name="Loftus B.J."/>
            <person name="Peterson S.N."/>
            <person name="Reich C.I."/>
            <person name="McNeil L.K."/>
            <person name="Badger J.H."/>
            <person name="Glodek A."/>
            <person name="Zhou L."/>
            <person name="Overbeek R."/>
            <person name="Gocayne J.D."/>
            <person name="Weidman J.F."/>
            <person name="McDonald L.A."/>
            <person name="Utterback T.R."/>
            <person name="Cotton M.D."/>
            <person name="Spriggs T."/>
            <person name="Artiach P."/>
            <person name="Kaine B.P."/>
            <person name="Sykes S.M."/>
            <person name="Sadow P.W."/>
            <person name="D'Andrea K.P."/>
            <person name="Bowman C."/>
            <person name="Fujii C."/>
            <person name="Garland S.A."/>
            <person name="Mason T.M."/>
            <person name="Olsen G.J."/>
            <person name="Fraser C.M."/>
            <person name="Smith H.O."/>
            <person name="Woese C.R."/>
            <person name="Venter J.C."/>
        </authorList>
    </citation>
    <scope>NUCLEOTIDE SEQUENCE [LARGE SCALE GENOMIC DNA]</scope>
    <source>
        <strain>ATCC 49558 / DSM 4304 / JCM 9628 / NBRC 100126 / VC-16</strain>
    </source>
</reference>
<feature type="chain" id="PRO_0000064007" description="Probable aquaporin AqpM">
    <location>
        <begin position="1"/>
        <end position="246"/>
    </location>
</feature>
<feature type="topological domain" description="Cytoplasmic" evidence="2">
    <location>
        <begin position="1"/>
        <end position="12"/>
    </location>
</feature>
<feature type="transmembrane region" description="Helical" evidence="2">
    <location>
        <begin position="13"/>
        <end position="33"/>
    </location>
</feature>
<feature type="topological domain" description="Extracellular" evidence="2">
    <location>
        <begin position="34"/>
        <end position="56"/>
    </location>
</feature>
<feature type="transmembrane region" description="Helical" evidence="2">
    <location>
        <begin position="57"/>
        <end position="77"/>
    </location>
</feature>
<feature type="topological domain" description="Cytoplasmic" evidence="2">
    <location>
        <begin position="78"/>
        <end position="104"/>
    </location>
</feature>
<feature type="transmembrane region" description="Helical" evidence="2">
    <location>
        <begin position="105"/>
        <end position="125"/>
    </location>
</feature>
<feature type="topological domain" description="Extracellular" evidence="2">
    <location>
        <begin position="126"/>
        <end position="146"/>
    </location>
</feature>
<feature type="transmembrane region" description="Helical" evidence="2">
    <location>
        <begin position="147"/>
        <end position="167"/>
    </location>
</feature>
<feature type="topological domain" description="Cytoplasmic" evidence="2">
    <location>
        <begin position="168"/>
        <end position="173"/>
    </location>
</feature>
<feature type="transmembrane region" description="Helical" evidence="2">
    <location>
        <begin position="174"/>
        <end position="194"/>
    </location>
</feature>
<feature type="topological domain" description="Extracellular" evidence="2">
    <location>
        <begin position="195"/>
        <end position="217"/>
    </location>
</feature>
<feature type="transmembrane region" description="Helical" evidence="2">
    <location>
        <begin position="218"/>
        <end position="238"/>
    </location>
</feature>
<feature type="topological domain" description="Cytoplasmic" evidence="2">
    <location>
        <begin position="239"/>
        <end position="246"/>
    </location>
</feature>
<feature type="short sequence motif" description="NPA 1">
    <location>
        <begin position="83"/>
        <end position="85"/>
    </location>
</feature>
<feature type="short sequence motif" description="NPA 2">
    <location>
        <begin position="200"/>
        <end position="202"/>
    </location>
</feature>
<feature type="helix" evidence="4">
    <location>
        <begin position="5"/>
        <end position="34"/>
    </location>
</feature>
<feature type="strand" evidence="4">
    <location>
        <begin position="41"/>
        <end position="43"/>
    </location>
</feature>
<feature type="turn" evidence="4">
    <location>
        <begin position="47"/>
        <end position="52"/>
    </location>
</feature>
<feature type="helix" evidence="4">
    <location>
        <begin position="53"/>
        <end position="78"/>
    </location>
</feature>
<feature type="helix" evidence="4">
    <location>
        <begin position="84"/>
        <end position="91"/>
    </location>
</feature>
<feature type="turn" evidence="4">
    <location>
        <begin position="92"/>
        <end position="94"/>
    </location>
</feature>
<feature type="helix" evidence="4">
    <location>
        <begin position="98"/>
        <end position="100"/>
    </location>
</feature>
<feature type="helix" evidence="4">
    <location>
        <begin position="101"/>
        <end position="123"/>
    </location>
</feature>
<feature type="helix" evidence="4">
    <location>
        <begin position="126"/>
        <end position="129"/>
    </location>
</feature>
<feature type="helix" evidence="4">
    <location>
        <begin position="132"/>
        <end position="134"/>
    </location>
</feature>
<feature type="helix" evidence="4">
    <location>
        <begin position="144"/>
        <end position="165"/>
    </location>
</feature>
<feature type="helix" evidence="4">
    <location>
        <begin position="176"/>
        <end position="195"/>
    </location>
</feature>
<feature type="helix" evidence="4">
    <location>
        <begin position="201"/>
        <end position="213"/>
    </location>
</feature>
<feature type="helix" evidence="4">
    <location>
        <begin position="219"/>
        <end position="223"/>
    </location>
</feature>
<feature type="helix" evidence="4">
    <location>
        <begin position="224"/>
        <end position="243"/>
    </location>
</feature>
<evidence type="ECO:0000250" key="1"/>
<evidence type="ECO:0000255" key="2"/>
<evidence type="ECO:0000305" key="3"/>
<evidence type="ECO:0007829" key="4">
    <source>
        <dbReference type="PDB" id="3NE2"/>
    </source>
</evidence>
<protein>
    <recommendedName>
        <fullName>Probable aquaporin AqpM</fullName>
    </recommendedName>
</protein>
<name>AQPM_ARCFU</name>
<gene>
    <name type="primary">aqpM</name>
    <name type="ordered locus">AF_1426</name>
</gene>
<dbReference type="EMBL" id="AE000782">
    <property type="protein sequence ID" value="AAB89820.1"/>
    <property type="molecule type" value="Genomic_DNA"/>
</dbReference>
<dbReference type="PIR" id="A69428">
    <property type="entry name" value="A69428"/>
</dbReference>
<dbReference type="PDB" id="3NE2">
    <property type="method" value="X-ray"/>
    <property type="resolution" value="3.00 A"/>
    <property type="chains" value="A/B/C/D/E/F/G/H=1-246"/>
</dbReference>
<dbReference type="PDBsum" id="3NE2"/>
<dbReference type="SMR" id="O28846"/>
<dbReference type="STRING" id="224325.AF_1426"/>
<dbReference type="TCDB" id="1.A.8.13.1">
    <property type="family name" value="the major intrinsic protein (mip) family"/>
</dbReference>
<dbReference type="PaxDb" id="224325-AF_1426"/>
<dbReference type="EnsemblBacteria" id="AAB89820">
    <property type="protein sequence ID" value="AAB89820"/>
    <property type="gene ID" value="AF_1426"/>
</dbReference>
<dbReference type="KEGG" id="afu:AF_1426"/>
<dbReference type="eggNOG" id="arCOG04431">
    <property type="taxonomic scope" value="Archaea"/>
</dbReference>
<dbReference type="HOGENOM" id="CLU_020019_3_2_2"/>
<dbReference type="PhylomeDB" id="O28846"/>
<dbReference type="EvolutionaryTrace" id="O28846"/>
<dbReference type="Proteomes" id="UP000002199">
    <property type="component" value="Chromosome"/>
</dbReference>
<dbReference type="GO" id="GO:0005886">
    <property type="term" value="C:plasma membrane"/>
    <property type="evidence" value="ECO:0007669"/>
    <property type="project" value="UniProtKB-SubCell"/>
</dbReference>
<dbReference type="GO" id="GO:0015267">
    <property type="term" value="F:channel activity"/>
    <property type="evidence" value="ECO:0007669"/>
    <property type="project" value="InterPro"/>
</dbReference>
<dbReference type="Gene3D" id="1.20.1080.10">
    <property type="entry name" value="Glycerol uptake facilitator protein"/>
    <property type="match status" value="1"/>
</dbReference>
<dbReference type="InterPro" id="IPR023271">
    <property type="entry name" value="Aquaporin-like"/>
</dbReference>
<dbReference type="InterPro" id="IPR034294">
    <property type="entry name" value="Aquaporin_transptr"/>
</dbReference>
<dbReference type="InterPro" id="IPR000425">
    <property type="entry name" value="MIP"/>
</dbReference>
<dbReference type="InterPro" id="IPR022357">
    <property type="entry name" value="MIP_CS"/>
</dbReference>
<dbReference type="NCBIfam" id="TIGR00861">
    <property type="entry name" value="MIP"/>
    <property type="match status" value="1"/>
</dbReference>
<dbReference type="PANTHER" id="PTHR45724:SF13">
    <property type="entry name" value="AQUAPORIN NIP1-1-RELATED"/>
    <property type="match status" value="1"/>
</dbReference>
<dbReference type="PANTHER" id="PTHR45724">
    <property type="entry name" value="AQUAPORIN NIP2-1"/>
    <property type="match status" value="1"/>
</dbReference>
<dbReference type="Pfam" id="PF00230">
    <property type="entry name" value="MIP"/>
    <property type="match status" value="1"/>
</dbReference>
<dbReference type="PRINTS" id="PR00783">
    <property type="entry name" value="MINTRINSICP"/>
</dbReference>
<dbReference type="SUPFAM" id="SSF81338">
    <property type="entry name" value="Aquaporin-like"/>
    <property type="match status" value="1"/>
</dbReference>
<dbReference type="PROSITE" id="PS00221">
    <property type="entry name" value="MIP"/>
    <property type="match status" value="1"/>
</dbReference>